<organism>
    <name type="scientific">Scyliorhinus canicula</name>
    <name type="common">Small-spotted catshark</name>
    <name type="synonym">Squalus canicula</name>
    <dbReference type="NCBI Taxonomy" id="7830"/>
    <lineage>
        <taxon>Eukaryota</taxon>
        <taxon>Metazoa</taxon>
        <taxon>Chordata</taxon>
        <taxon>Craniata</taxon>
        <taxon>Vertebrata</taxon>
        <taxon>Chondrichthyes</taxon>
        <taxon>Elasmobranchii</taxon>
        <taxon>Galeomorphii</taxon>
        <taxon>Galeoidea</taxon>
        <taxon>Carcharhiniformes</taxon>
        <taxon>Scyliorhinidae</taxon>
        <taxon>Scyliorhinus</taxon>
    </lineage>
</organism>
<comment type="function">
    <text>Has a suggested role in osmoregulation and as a corticotropin-releasing factor. Probably involved in smooth muscle stimulation.</text>
</comment>
<comment type="subcellular location">
    <subcellularLocation>
        <location>Secreted</location>
    </subcellularLocation>
</comment>
<comment type="similarity">
    <text evidence="1">Belongs to the urotensin-2 family.</text>
</comment>
<name>UTS2_SCYCA</name>
<reference key="1">
    <citation type="journal article" date="1992" name="Neuroendocrinology">
        <title>Purification and characterization of urotensin II and parvalbumin from an elasmobranch fish, Scyliorhinus canicula (common dogfish).</title>
        <authorList>
            <person name="Conlon J.M."/>
            <person name="O'Harte F."/>
            <person name="Smith D.D."/>
            <person name="Balment R.J."/>
            <person name="Hazon N."/>
        </authorList>
    </citation>
    <scope>PROTEIN SEQUENCE</scope>
    <source>
        <tissue>Spinal cord</tissue>
    </source>
</reference>
<proteinExistence type="evidence at protein level"/>
<dbReference type="GO" id="GO:0005576">
    <property type="term" value="C:extracellular region"/>
    <property type="evidence" value="ECO:0007669"/>
    <property type="project" value="UniProtKB-SubCell"/>
</dbReference>
<dbReference type="GO" id="GO:0005179">
    <property type="term" value="F:hormone activity"/>
    <property type="evidence" value="ECO:0007669"/>
    <property type="project" value="UniProtKB-KW"/>
</dbReference>
<dbReference type="GO" id="GO:0097746">
    <property type="term" value="P:blood vessel diameter maintenance"/>
    <property type="evidence" value="ECO:0007669"/>
    <property type="project" value="InterPro"/>
</dbReference>
<dbReference type="GO" id="GO:0008217">
    <property type="term" value="P:regulation of blood pressure"/>
    <property type="evidence" value="ECO:0007669"/>
    <property type="project" value="InterPro"/>
</dbReference>
<dbReference type="InterPro" id="IPR001483">
    <property type="entry name" value="Urotensin_II"/>
</dbReference>
<dbReference type="Pfam" id="PF02083">
    <property type="entry name" value="Urotensin_II"/>
    <property type="match status" value="1"/>
</dbReference>
<dbReference type="PROSITE" id="PS00984">
    <property type="entry name" value="UROTENSIN_II"/>
    <property type="match status" value="1"/>
</dbReference>
<evidence type="ECO:0000305" key="1"/>
<accession>P35490</accession>
<keyword id="KW-0903">Direct protein sequencing</keyword>
<keyword id="KW-1015">Disulfide bond</keyword>
<keyword id="KW-0372">Hormone</keyword>
<keyword id="KW-0964">Secreted</keyword>
<protein>
    <recommendedName>
        <fullName>Urotensin-2</fullName>
    </recommendedName>
    <alternativeName>
        <fullName>Urotensin II</fullName>
        <shortName>U-II</shortName>
        <shortName>UII</shortName>
    </alternativeName>
</protein>
<feature type="peptide" id="PRO_0000044570" description="Urotensin-2">
    <location>
        <begin position="1"/>
        <end position="12"/>
    </location>
</feature>
<feature type="disulfide bond">
    <location>
        <begin position="6"/>
        <end position="11"/>
    </location>
</feature>
<sequence>NNFSDCFWKYCV</sequence>